<evidence type="ECO:0000255" key="1">
    <source>
        <dbReference type="HAMAP-Rule" id="MF_01202"/>
    </source>
</evidence>
<feature type="chain" id="PRO_1000138650" description="D-amino acid dehydrogenase">
    <location>
        <begin position="1"/>
        <end position="432"/>
    </location>
</feature>
<feature type="binding site" evidence="1">
    <location>
        <begin position="3"/>
        <end position="17"/>
    </location>
    <ligand>
        <name>FAD</name>
        <dbReference type="ChEBI" id="CHEBI:57692"/>
    </ligand>
</feature>
<gene>
    <name evidence="1" type="primary">dadA</name>
    <name type="ordered locus">ECIAI1_1206</name>
</gene>
<keyword id="KW-0274">FAD</keyword>
<keyword id="KW-0285">Flavoprotein</keyword>
<keyword id="KW-0560">Oxidoreductase</keyword>
<reference key="1">
    <citation type="journal article" date="2009" name="PLoS Genet.">
        <title>Organised genome dynamics in the Escherichia coli species results in highly diverse adaptive paths.</title>
        <authorList>
            <person name="Touchon M."/>
            <person name="Hoede C."/>
            <person name="Tenaillon O."/>
            <person name="Barbe V."/>
            <person name="Baeriswyl S."/>
            <person name="Bidet P."/>
            <person name="Bingen E."/>
            <person name="Bonacorsi S."/>
            <person name="Bouchier C."/>
            <person name="Bouvet O."/>
            <person name="Calteau A."/>
            <person name="Chiapello H."/>
            <person name="Clermont O."/>
            <person name="Cruveiller S."/>
            <person name="Danchin A."/>
            <person name="Diard M."/>
            <person name="Dossat C."/>
            <person name="Karoui M.E."/>
            <person name="Frapy E."/>
            <person name="Garry L."/>
            <person name="Ghigo J.M."/>
            <person name="Gilles A.M."/>
            <person name="Johnson J."/>
            <person name="Le Bouguenec C."/>
            <person name="Lescat M."/>
            <person name="Mangenot S."/>
            <person name="Martinez-Jehanne V."/>
            <person name="Matic I."/>
            <person name="Nassif X."/>
            <person name="Oztas S."/>
            <person name="Petit M.A."/>
            <person name="Pichon C."/>
            <person name="Rouy Z."/>
            <person name="Ruf C.S."/>
            <person name="Schneider D."/>
            <person name="Tourret J."/>
            <person name="Vacherie B."/>
            <person name="Vallenet D."/>
            <person name="Medigue C."/>
            <person name="Rocha E.P.C."/>
            <person name="Denamur E."/>
        </authorList>
    </citation>
    <scope>NUCLEOTIDE SEQUENCE [LARGE SCALE GENOMIC DNA]</scope>
    <source>
        <strain>IAI1</strain>
    </source>
</reference>
<name>DADA_ECO8A</name>
<organism>
    <name type="scientific">Escherichia coli O8 (strain IAI1)</name>
    <dbReference type="NCBI Taxonomy" id="585034"/>
    <lineage>
        <taxon>Bacteria</taxon>
        <taxon>Pseudomonadati</taxon>
        <taxon>Pseudomonadota</taxon>
        <taxon>Gammaproteobacteria</taxon>
        <taxon>Enterobacterales</taxon>
        <taxon>Enterobacteriaceae</taxon>
        <taxon>Escherichia</taxon>
    </lineage>
</organism>
<proteinExistence type="inferred from homology"/>
<dbReference type="EC" id="1.4.99.-" evidence="1"/>
<dbReference type="EMBL" id="CU928160">
    <property type="protein sequence ID" value="CAQ98068.1"/>
    <property type="molecule type" value="Genomic_DNA"/>
</dbReference>
<dbReference type="RefSeq" id="WP_001266908.1">
    <property type="nucleotide sequence ID" value="NC_011741.1"/>
</dbReference>
<dbReference type="SMR" id="B7LXA3"/>
<dbReference type="GeneID" id="93776243"/>
<dbReference type="KEGG" id="ecr:ECIAI1_1206"/>
<dbReference type="HOGENOM" id="CLU_007884_9_2_6"/>
<dbReference type="UniPathway" id="UPA00043">
    <property type="reaction ID" value="UER00498"/>
</dbReference>
<dbReference type="GO" id="GO:0005737">
    <property type="term" value="C:cytoplasm"/>
    <property type="evidence" value="ECO:0007669"/>
    <property type="project" value="TreeGrafter"/>
</dbReference>
<dbReference type="GO" id="GO:0005886">
    <property type="term" value="C:plasma membrane"/>
    <property type="evidence" value="ECO:0007669"/>
    <property type="project" value="TreeGrafter"/>
</dbReference>
<dbReference type="GO" id="GO:0008718">
    <property type="term" value="F:D-amino-acid dehydrogenase activity"/>
    <property type="evidence" value="ECO:0007669"/>
    <property type="project" value="UniProtKB-UniRule"/>
</dbReference>
<dbReference type="GO" id="GO:0055130">
    <property type="term" value="P:D-alanine catabolic process"/>
    <property type="evidence" value="ECO:0007669"/>
    <property type="project" value="UniProtKB-UniPathway"/>
</dbReference>
<dbReference type="FunFam" id="3.50.50.60:FF:000020">
    <property type="entry name" value="D-amino acid dehydrogenase"/>
    <property type="match status" value="1"/>
</dbReference>
<dbReference type="Gene3D" id="3.30.9.10">
    <property type="entry name" value="D-Amino Acid Oxidase, subunit A, domain 2"/>
    <property type="match status" value="1"/>
</dbReference>
<dbReference type="Gene3D" id="3.50.50.60">
    <property type="entry name" value="FAD/NAD(P)-binding domain"/>
    <property type="match status" value="2"/>
</dbReference>
<dbReference type="HAMAP" id="MF_01202">
    <property type="entry name" value="DadA"/>
    <property type="match status" value="1"/>
</dbReference>
<dbReference type="InterPro" id="IPR023080">
    <property type="entry name" value="DadA"/>
</dbReference>
<dbReference type="InterPro" id="IPR006076">
    <property type="entry name" value="FAD-dep_OxRdtase"/>
</dbReference>
<dbReference type="InterPro" id="IPR036188">
    <property type="entry name" value="FAD/NAD-bd_sf"/>
</dbReference>
<dbReference type="NCBIfam" id="NF001933">
    <property type="entry name" value="PRK00711.1"/>
    <property type="match status" value="1"/>
</dbReference>
<dbReference type="PANTHER" id="PTHR13847:SF280">
    <property type="entry name" value="D-AMINO ACID DEHYDROGENASE"/>
    <property type="match status" value="1"/>
</dbReference>
<dbReference type="PANTHER" id="PTHR13847">
    <property type="entry name" value="SARCOSINE DEHYDROGENASE-RELATED"/>
    <property type="match status" value="1"/>
</dbReference>
<dbReference type="Pfam" id="PF01266">
    <property type="entry name" value="DAO"/>
    <property type="match status" value="1"/>
</dbReference>
<dbReference type="SUPFAM" id="SSF54373">
    <property type="entry name" value="FAD-linked reductases, C-terminal domain"/>
    <property type="match status" value="1"/>
</dbReference>
<dbReference type="SUPFAM" id="SSF51905">
    <property type="entry name" value="FAD/NAD(P)-binding domain"/>
    <property type="match status" value="1"/>
</dbReference>
<accession>B7LXA3</accession>
<sequence length="432" mass="47607">MRVVILGSGVVGVASAWYLNQAGHEVTVIDREPGAALETSAANAGQISPGYAAPWAAPGVPLKAIKWMFQRHAPLAVRLDGTQFQLKWMWQMLRNCDTSHYMENKGRMVRLAEYSRDCLKALRAETNIQYEGRQGGTLQLFRTEQQYENATRDIAVLEDAGVPYQLLESSRLAEVEPALAEVAHKLTGGLQLPNDETGDCQLFTQNLARMAEQAGVKFRFNTPVDQLLCDGEQIYGVKCGDEVIKADAYVMAFGSYSTAMLKGIVDIPVYPLKGYSLTIPIAQEDGAPVSTILDETYKIAITRFDNRIRVGGMAEIVGFNTELLQPRRETLEMVVRDLYPRGGHVEQATFWTGLRPMTPDGTPVVGRTRFKNLWLNTGHGTLGWTMACGSGQLLSDLLSGRTPAIPYEDLSVARYSRGFTPSRPGHLHGAHS</sequence>
<comment type="function">
    <text evidence="1">Oxidative deamination of D-amino acids.</text>
</comment>
<comment type="catalytic activity">
    <reaction evidence="1">
        <text>a D-alpha-amino acid + A + H2O = a 2-oxocarboxylate + AH2 + NH4(+)</text>
        <dbReference type="Rhea" id="RHEA:18125"/>
        <dbReference type="ChEBI" id="CHEBI:13193"/>
        <dbReference type="ChEBI" id="CHEBI:15377"/>
        <dbReference type="ChEBI" id="CHEBI:17499"/>
        <dbReference type="ChEBI" id="CHEBI:28938"/>
        <dbReference type="ChEBI" id="CHEBI:35179"/>
        <dbReference type="ChEBI" id="CHEBI:59871"/>
    </reaction>
</comment>
<comment type="cofactor">
    <cofactor evidence="1">
        <name>FAD</name>
        <dbReference type="ChEBI" id="CHEBI:57692"/>
    </cofactor>
</comment>
<comment type="pathway">
    <text>Amino-acid degradation; D-alanine degradation; NH(3) and pyruvate from D-alanine: step 1/1.</text>
</comment>
<comment type="similarity">
    <text evidence="1">Belongs to the DadA oxidoreductase family.</text>
</comment>
<protein>
    <recommendedName>
        <fullName evidence="1">D-amino acid dehydrogenase</fullName>
        <ecNumber evidence="1">1.4.99.-</ecNumber>
    </recommendedName>
</protein>